<name>SAER_STAA8</name>
<reference key="1">
    <citation type="journal article" date="2003" name="J. Bacteriol.">
        <title>Molecular architecture of the regulatory locus sae of Staphylococcus aureus and its impact on expression of virulence factors.</title>
        <authorList>
            <person name="Steinhuber A."/>
            <person name="Goerke C."/>
            <person name="Bayer M.G."/>
            <person name="Doering G."/>
            <person name="Wolz C."/>
        </authorList>
    </citation>
    <scope>NUCLEOTIDE SEQUENCE [GENOMIC DNA]</scope>
    <scope>FUNCTION IN REGULATION OF EXOPROTEINS SYNTHESIS</scope>
</reference>
<reference key="2">
    <citation type="book" date="2006" name="Gram positive pathogens, 2nd edition">
        <title>The Staphylococcus aureus NCTC 8325 genome.</title>
        <editorList>
            <person name="Fischetti V."/>
            <person name="Novick R."/>
            <person name="Ferretti J."/>
            <person name="Portnoy D."/>
            <person name="Rood J."/>
        </editorList>
        <authorList>
            <person name="Gillaspy A.F."/>
            <person name="Worrell V."/>
            <person name="Orvis J."/>
            <person name="Roe B.A."/>
            <person name="Dyer D.W."/>
            <person name="Iandolo J.J."/>
        </authorList>
    </citation>
    <scope>NUCLEOTIDE SEQUENCE [LARGE SCALE GENOMIC DNA]</scope>
    <source>
        <strain>NCTC 8325 / PS 47</strain>
    </source>
</reference>
<reference key="3">
    <citation type="journal article" date="1994" name="Can. J. Microbiol.">
        <title>Characterization of a Tn551-mutant of Staphylococcus aureus defective in the production of several exoproteins.</title>
        <authorList>
            <person name="Giraudo A.T."/>
            <person name="Raspanti C.G."/>
            <person name="Calzolari A."/>
            <person name="Nagel R."/>
        </authorList>
    </citation>
    <scope>FUNCTION IN REGULATION OF EXOPROTEINS SYNTHESIS</scope>
</reference>
<reference key="4">
    <citation type="journal article" date="1996" name="Can. J. Microbiol.">
        <title>Phenotypic characterization and virulence of a sae- agr- mutant of Staphylococcus aureus.</title>
        <authorList>
            <person name="Giraudo A.T."/>
            <person name="Rampone H."/>
            <person name="Calzolari A."/>
            <person name="Nagel R."/>
        </authorList>
    </citation>
    <scope>FUNCTION IN REGULATION OF EXOPROTEINS SYNTHESIS</scope>
</reference>
<reference key="5">
    <citation type="journal article" date="1997" name="Arch. Microbiol.">
        <title>The sae locus of Staphylococcus aureus controls exoprotein synthesis at the transcriptional level.</title>
        <authorList>
            <person name="Giraudo A.T."/>
            <person name="Cheung A.L."/>
            <person name="Nagel R."/>
        </authorList>
    </citation>
    <scope>FUNCTION IN REGULATION OF EXOPROTEINS SYNTHESIS</scope>
</reference>
<reference key="6">
    <citation type="journal article" date="1999" name="FEMS Microbiol. Lett.">
        <title>The sae locus of Staphylococcus aureus encodes a two-component regulatory system.</title>
        <authorList>
            <person name="Giraudo A.T."/>
            <person name="Calzolari A."/>
            <person name="Cataldi A.A."/>
            <person name="Bogni C."/>
            <person name="Nagel R."/>
        </authorList>
    </citation>
    <scope>FUNCTION IN REGULATION OF EXOPROTEINS SYNTHESIS</scope>
</reference>
<reference key="7">
    <citation type="journal article" date="2001" name="Mol. Microbiol.">
        <title>Impact of the regulatory loci agr, sarA and sae of Staphylococcus aureus on the induction of alpha-toxin during device-related infection resolved by direct quantitative transcript analysis.</title>
        <authorList>
            <person name="Goerke C."/>
            <person name="Fluckiger U."/>
            <person name="Steinhuber A."/>
            <person name="Zimmerli W."/>
            <person name="Wolz C."/>
        </authorList>
    </citation>
    <scope>FUNCTION IN REGULATION OF EXOPROTEINS SYNTHESIS</scope>
</reference>
<reference key="8">
    <citation type="journal article" date="2003" name="Curr. Microbiol.">
        <title>Studies on the expression of regulatory locus sae in Staphylococcus aureus.</title>
        <authorList>
            <person name="Giraudo A.T."/>
            <person name="Mansilla C."/>
            <person name="Chan A."/>
            <person name="Raspanti C.G."/>
            <person name="Nagel R."/>
        </authorList>
    </citation>
    <scope>REGULATION BY AGR</scope>
    <scope>DEVELOPMENTAL STAGE</scope>
</reference>
<reference key="9">
    <citation type="journal article" date="2003" name="Microbiology">
        <title>The staphylococcal saeRS system coordinates environmental signals with agr quorum sensing.</title>
        <authorList>
            <person name="Novick R.P."/>
            <person name="Jiang D."/>
        </authorList>
    </citation>
    <scope>FUNCTION IN REGULATION OF EXOPROTEINS SYNTHESIS</scope>
    <scope>INDUCTION</scope>
</reference>
<reference key="10">
    <citation type="journal article" date="2004" name="J. Bacteriol.">
        <title>Large-scale identification of genes required for full virulence of Staphylococcus aureus.</title>
        <authorList>
            <person name="Benton B.M."/>
            <person name="Zhang J.P."/>
            <person name="Bond S."/>
            <person name="Pope C."/>
            <person name="Christian T."/>
            <person name="Lee L."/>
            <person name="Winterberg K.M."/>
            <person name="Schmid M.B."/>
            <person name="Buysse J.M."/>
        </authorList>
    </citation>
    <scope>VIRULENCE</scope>
</reference>
<reference key="11">
    <citation type="journal article" date="2005" name="Microbiology">
        <title>Sae is essential for expression of the staphylococcal adhesins Eap and Emp.</title>
        <authorList>
            <person name="Harraghy N."/>
            <person name="Kormanec J."/>
            <person name="Wolz C."/>
            <person name="Homerova D."/>
            <person name="Goerke C."/>
            <person name="Ohlsen K."/>
            <person name="Qazi S."/>
            <person name="Hill P."/>
            <person name="Herrmann M."/>
        </authorList>
    </citation>
    <scope>FUNCTION IN REGULATION OF ADHESIN SYNTHESIS</scope>
</reference>
<reference key="12">
    <citation type="journal article" date="2006" name="J. Infect. Dis.">
        <title>Regulation of Staphylococcus aureus alpha-toxin gene (hla) expression by agr, sarA, and sae in vitro and in experimental infective endocarditis.</title>
        <authorList>
            <person name="Xiong Y.Q."/>
            <person name="Willard J."/>
            <person name="Yeaman M.R."/>
            <person name="Cheung A.L."/>
            <person name="Bayer A.S."/>
        </authorList>
    </citation>
    <scope>FUNCTION IN REGULATION OF EXOPROTEINS SYNTHESIS</scope>
    <scope>VIRULENCE</scope>
</reference>
<evidence type="ECO:0000250" key="1"/>
<evidence type="ECO:0000255" key="2">
    <source>
        <dbReference type="PROSITE-ProRule" id="PRU00169"/>
    </source>
</evidence>
<evidence type="ECO:0000255" key="3">
    <source>
        <dbReference type="PROSITE-ProRule" id="PRU01091"/>
    </source>
</evidence>
<evidence type="ECO:0000269" key="4">
    <source>
    </source>
</evidence>
<evidence type="ECO:0000269" key="5">
    <source>
    </source>
</evidence>
<evidence type="ECO:0000269" key="6">
    <source>
    </source>
</evidence>
<evidence type="ECO:0000269" key="7">
    <source>
    </source>
</evidence>
<evidence type="ECO:0000269" key="8">
    <source>
    </source>
</evidence>
<evidence type="ECO:0000269" key="9">
    <source>
    </source>
</evidence>
<evidence type="ECO:0000269" key="10">
    <source>
    </source>
</evidence>
<evidence type="ECO:0000269" key="11">
    <source>
    </source>
</evidence>
<evidence type="ECO:0000269" key="12">
    <source>
    </source>
</evidence>
<evidence type="ECO:0000269" key="13">
    <source>
    </source>
</evidence>
<evidence type="ECO:0007829" key="14">
    <source>
        <dbReference type="PDB" id="4QWQ"/>
    </source>
</evidence>
<proteinExistence type="evidence at protein level"/>
<protein>
    <recommendedName>
        <fullName>Response regulator SaeR</fullName>
    </recommendedName>
    <alternativeName>
        <fullName>Staphylococcus exoprotein expression protein R</fullName>
    </alternativeName>
</protein>
<feature type="chain" id="PRO_0000295925" description="Response regulator SaeR">
    <location>
        <begin position="1"/>
        <end position="228"/>
    </location>
</feature>
<feature type="domain" description="Response regulatory" evidence="2">
    <location>
        <begin position="3"/>
        <end position="116"/>
    </location>
</feature>
<feature type="DNA-binding region" description="OmpR/PhoB-type" evidence="3">
    <location>
        <begin position="127"/>
        <end position="226"/>
    </location>
</feature>
<feature type="modified residue" description="4-aspartylphosphate" evidence="2">
    <location>
        <position position="51"/>
    </location>
</feature>
<feature type="strand" evidence="14">
    <location>
        <begin position="129"/>
        <end position="132"/>
    </location>
</feature>
<feature type="strand" evidence="14">
    <location>
        <begin position="135"/>
        <end position="138"/>
    </location>
</feature>
<feature type="turn" evidence="14">
    <location>
        <begin position="139"/>
        <end position="142"/>
    </location>
</feature>
<feature type="strand" evidence="14">
    <location>
        <begin position="143"/>
        <end position="146"/>
    </location>
</feature>
<feature type="helix" evidence="14">
    <location>
        <begin position="155"/>
        <end position="165"/>
    </location>
</feature>
<feature type="turn" evidence="14">
    <location>
        <begin position="166"/>
        <end position="169"/>
    </location>
</feature>
<feature type="helix" evidence="14">
    <location>
        <begin position="174"/>
        <end position="181"/>
    </location>
</feature>
<feature type="helix" evidence="14">
    <location>
        <begin position="193"/>
        <end position="206"/>
    </location>
</feature>
<feature type="strand" evidence="14">
    <location>
        <begin position="211"/>
        <end position="217"/>
    </location>
</feature>
<feature type="turn" evidence="14">
    <location>
        <begin position="218"/>
        <end position="220"/>
    </location>
</feature>
<feature type="strand" evidence="14">
    <location>
        <begin position="221"/>
        <end position="226"/>
    </location>
</feature>
<keyword id="KW-0002">3D-structure</keyword>
<keyword id="KW-0010">Activator</keyword>
<keyword id="KW-0963">Cytoplasm</keyword>
<keyword id="KW-0238">DNA-binding</keyword>
<keyword id="KW-0597">Phosphoprotein</keyword>
<keyword id="KW-1185">Reference proteome</keyword>
<keyword id="KW-0716">Sensory transduction</keyword>
<keyword id="KW-0804">Transcription</keyword>
<keyword id="KW-0805">Transcription regulation</keyword>
<keyword id="KW-0902">Two-component regulatory system</keyword>
<keyword id="KW-0843">Virulence</keyword>
<organism>
    <name type="scientific">Staphylococcus aureus (strain NCTC 8325 / PS 47)</name>
    <dbReference type="NCBI Taxonomy" id="93061"/>
    <lineage>
        <taxon>Bacteria</taxon>
        <taxon>Bacillati</taxon>
        <taxon>Bacillota</taxon>
        <taxon>Bacilli</taxon>
        <taxon>Bacillales</taxon>
        <taxon>Staphylococcaceae</taxon>
        <taxon>Staphylococcus</taxon>
    </lineage>
</organism>
<gene>
    <name type="primary">saeR</name>
    <name type="ordered locus">SAOUHSC_00715</name>
</gene>
<sequence>MTHLLIVDDEQDIVDICQTYFEYEGYKVTTTTSGKEAISLLSNDIDIMVLDIMMPEVNGYDIVKEMKRQKLDIPFIYLTAKTQEHDTIYALTLGADDYVKKPFSPRELVLRINNLLTRMKKYHHQPVEQLSFDELTLINLSKVVTVNGHEVPMRIKEFELLWYLASRENEVISKSELLEKVWGYDYYEDANTVNVHIHRIREKLEKESFTTYTITTVWGLGYKFERSR</sequence>
<accession>Q2G2G2</accession>
<accession>Q840P6</accession>
<comment type="function">
    <text evidence="4 5 7 8 9 10 11 12 13">Member of the two-component regulatory system SaeR/SaeS involved in the regulation of staphylococcal virulence factors in a strain-dependent fashion. Probably functions as a transcriptional regulator via a specific DNA-binding domain, recognizing motifs near the promoter sequences of target genes. SaeR/SaeS activates the expression of exoproteins involved in adhesion and invasion of host cells, including hemolysins (Hla, Hlb), Coa, DNase, Spa and cell wall-associated proteins (Emp, Eap, FnbA). Acts probably downstream of the Agr system in the regulatory cascade of virulence factors.</text>
</comment>
<comment type="subcellular location">
    <subcellularLocation>
        <location evidence="1">Cytoplasm</location>
    </subcellularLocation>
</comment>
<comment type="developmental stage">
    <text evidence="6">Expressed at high levels in the late and post-exponential growth phases.</text>
</comment>
<comment type="induction">
    <text evidence="7">Autoregulated. Transcription is affected by Agr and SarA. Also, transcriptionally repressed by NaCL, pH below 6, glucose and the antibiotic clindamycin.</text>
</comment>
<comment type="PTM">
    <text evidence="1">Phosphorylated by SaeS.</text>
</comment>
<dbReference type="EMBL" id="AJ556795">
    <property type="protein sequence ID" value="CAD89114.1"/>
    <property type="molecule type" value="Genomic_DNA"/>
</dbReference>
<dbReference type="EMBL" id="CP000253">
    <property type="protein sequence ID" value="ABD29848.1"/>
    <property type="molecule type" value="Genomic_DNA"/>
</dbReference>
<dbReference type="RefSeq" id="WP_000149344.1">
    <property type="nucleotide sequence ID" value="NZ_LS483365.1"/>
</dbReference>
<dbReference type="RefSeq" id="YP_499274.1">
    <property type="nucleotide sequence ID" value="NC_007795.1"/>
</dbReference>
<dbReference type="PDB" id="4QWQ">
    <property type="method" value="X-ray"/>
    <property type="resolution" value="2.50 A"/>
    <property type="chains" value="A/B=123-228"/>
</dbReference>
<dbReference type="PDBsum" id="4QWQ"/>
<dbReference type="SMR" id="Q2G2G2"/>
<dbReference type="STRING" id="93061.SAOUHSC_00715"/>
<dbReference type="PaxDb" id="1280-SAXN108_0774"/>
<dbReference type="GeneID" id="3919342"/>
<dbReference type="KEGG" id="sao:SAOUHSC_00715"/>
<dbReference type="PATRIC" id="fig|93061.5.peg.644"/>
<dbReference type="eggNOG" id="COG0745">
    <property type="taxonomic scope" value="Bacteria"/>
</dbReference>
<dbReference type="HOGENOM" id="CLU_000445_30_4_9"/>
<dbReference type="OrthoDB" id="9790442at2"/>
<dbReference type="EvolutionaryTrace" id="Q2G2G2"/>
<dbReference type="PHI-base" id="PHI:10204"/>
<dbReference type="PHI-base" id="PHI:10240"/>
<dbReference type="PHI-base" id="PHI:10361"/>
<dbReference type="PHI-base" id="PHI:11421"/>
<dbReference type="PHI-base" id="PHI:4654"/>
<dbReference type="PHI-base" id="PHI:8074"/>
<dbReference type="PHI-base" id="PHI:8780"/>
<dbReference type="PRO" id="PR:Q2G2G2"/>
<dbReference type="Proteomes" id="UP000008816">
    <property type="component" value="Chromosome"/>
</dbReference>
<dbReference type="GO" id="GO:0005829">
    <property type="term" value="C:cytosol"/>
    <property type="evidence" value="ECO:0000318"/>
    <property type="project" value="GO_Central"/>
</dbReference>
<dbReference type="GO" id="GO:0032993">
    <property type="term" value="C:protein-DNA complex"/>
    <property type="evidence" value="ECO:0000318"/>
    <property type="project" value="GO_Central"/>
</dbReference>
<dbReference type="GO" id="GO:0000156">
    <property type="term" value="F:phosphorelay response regulator activity"/>
    <property type="evidence" value="ECO:0000318"/>
    <property type="project" value="GO_Central"/>
</dbReference>
<dbReference type="GO" id="GO:0000976">
    <property type="term" value="F:transcription cis-regulatory region binding"/>
    <property type="evidence" value="ECO:0000318"/>
    <property type="project" value="GO_Central"/>
</dbReference>
<dbReference type="GO" id="GO:0006355">
    <property type="term" value="P:regulation of DNA-templated transcription"/>
    <property type="evidence" value="ECO:0000318"/>
    <property type="project" value="GO_Central"/>
</dbReference>
<dbReference type="CDD" id="cd17574">
    <property type="entry name" value="REC_OmpR"/>
    <property type="match status" value="1"/>
</dbReference>
<dbReference type="CDD" id="cd00383">
    <property type="entry name" value="trans_reg_C"/>
    <property type="match status" value="1"/>
</dbReference>
<dbReference type="FunFam" id="1.10.10.10:FF:000018">
    <property type="entry name" value="DNA-binding response regulator ResD"/>
    <property type="match status" value="1"/>
</dbReference>
<dbReference type="Gene3D" id="3.40.50.2300">
    <property type="match status" value="1"/>
</dbReference>
<dbReference type="Gene3D" id="6.10.250.690">
    <property type="match status" value="1"/>
</dbReference>
<dbReference type="Gene3D" id="1.10.10.10">
    <property type="entry name" value="Winged helix-like DNA-binding domain superfamily/Winged helix DNA-binding domain"/>
    <property type="match status" value="1"/>
</dbReference>
<dbReference type="InterPro" id="IPR011006">
    <property type="entry name" value="CheY-like_superfamily"/>
</dbReference>
<dbReference type="InterPro" id="IPR001867">
    <property type="entry name" value="OmpR/PhoB-type_DNA-bd"/>
</dbReference>
<dbReference type="InterPro" id="IPR001789">
    <property type="entry name" value="Sig_transdc_resp-reg_receiver"/>
</dbReference>
<dbReference type="InterPro" id="IPR039420">
    <property type="entry name" value="WalR-like"/>
</dbReference>
<dbReference type="InterPro" id="IPR036388">
    <property type="entry name" value="WH-like_DNA-bd_sf"/>
</dbReference>
<dbReference type="PANTHER" id="PTHR48111">
    <property type="entry name" value="REGULATOR OF RPOS"/>
    <property type="match status" value="1"/>
</dbReference>
<dbReference type="PANTHER" id="PTHR48111:SF2">
    <property type="entry name" value="RESPONSE REGULATOR SAER"/>
    <property type="match status" value="1"/>
</dbReference>
<dbReference type="Pfam" id="PF00072">
    <property type="entry name" value="Response_reg"/>
    <property type="match status" value="1"/>
</dbReference>
<dbReference type="Pfam" id="PF00486">
    <property type="entry name" value="Trans_reg_C"/>
    <property type="match status" value="1"/>
</dbReference>
<dbReference type="SMART" id="SM00448">
    <property type="entry name" value="REC"/>
    <property type="match status" value="1"/>
</dbReference>
<dbReference type="SMART" id="SM00862">
    <property type="entry name" value="Trans_reg_C"/>
    <property type="match status" value="1"/>
</dbReference>
<dbReference type="SUPFAM" id="SSF52172">
    <property type="entry name" value="CheY-like"/>
    <property type="match status" value="1"/>
</dbReference>
<dbReference type="PROSITE" id="PS51755">
    <property type="entry name" value="OMPR_PHOB"/>
    <property type="match status" value="1"/>
</dbReference>
<dbReference type="PROSITE" id="PS50110">
    <property type="entry name" value="RESPONSE_REGULATORY"/>
    <property type="match status" value="1"/>
</dbReference>